<accession>Q9A5A9</accession>
<dbReference type="EC" id="6.3.2.4" evidence="2"/>
<dbReference type="EMBL" id="AE005673">
    <property type="protein sequence ID" value="AAK24514.1"/>
    <property type="molecule type" value="Genomic_DNA"/>
</dbReference>
<dbReference type="PIR" id="F87564">
    <property type="entry name" value="F87564"/>
</dbReference>
<dbReference type="RefSeq" id="NP_421346.1">
    <property type="nucleotide sequence ID" value="NC_002696.2"/>
</dbReference>
<dbReference type="RefSeq" id="WP_010920400.1">
    <property type="nucleotide sequence ID" value="NC_002696.2"/>
</dbReference>
<dbReference type="SMR" id="Q9A5A9"/>
<dbReference type="STRING" id="190650.CC_2543"/>
<dbReference type="EnsemblBacteria" id="AAK24514">
    <property type="protein sequence ID" value="AAK24514"/>
    <property type="gene ID" value="CC_2543"/>
</dbReference>
<dbReference type="KEGG" id="ccr:CC_2543"/>
<dbReference type="PATRIC" id="fig|190650.5.peg.2557"/>
<dbReference type="eggNOG" id="COG1181">
    <property type="taxonomic scope" value="Bacteria"/>
</dbReference>
<dbReference type="HOGENOM" id="CLU_039268_1_1_5"/>
<dbReference type="BioCyc" id="CAULO:CC2543-MONOMER"/>
<dbReference type="UniPathway" id="UPA00219"/>
<dbReference type="Proteomes" id="UP000001816">
    <property type="component" value="Chromosome"/>
</dbReference>
<dbReference type="GO" id="GO:0005737">
    <property type="term" value="C:cytoplasm"/>
    <property type="evidence" value="ECO:0007669"/>
    <property type="project" value="UniProtKB-SubCell"/>
</dbReference>
<dbReference type="GO" id="GO:0005524">
    <property type="term" value="F:ATP binding"/>
    <property type="evidence" value="ECO:0007669"/>
    <property type="project" value="UniProtKB-KW"/>
</dbReference>
<dbReference type="GO" id="GO:0008716">
    <property type="term" value="F:D-alanine-D-alanine ligase activity"/>
    <property type="evidence" value="ECO:0007669"/>
    <property type="project" value="UniProtKB-UniRule"/>
</dbReference>
<dbReference type="GO" id="GO:0046872">
    <property type="term" value="F:metal ion binding"/>
    <property type="evidence" value="ECO:0007669"/>
    <property type="project" value="UniProtKB-KW"/>
</dbReference>
<dbReference type="GO" id="GO:0071555">
    <property type="term" value="P:cell wall organization"/>
    <property type="evidence" value="ECO:0007669"/>
    <property type="project" value="UniProtKB-KW"/>
</dbReference>
<dbReference type="GO" id="GO:0009252">
    <property type="term" value="P:peptidoglycan biosynthetic process"/>
    <property type="evidence" value="ECO:0007669"/>
    <property type="project" value="UniProtKB-UniRule"/>
</dbReference>
<dbReference type="GO" id="GO:0008360">
    <property type="term" value="P:regulation of cell shape"/>
    <property type="evidence" value="ECO:0007669"/>
    <property type="project" value="UniProtKB-KW"/>
</dbReference>
<dbReference type="Gene3D" id="3.40.50.20">
    <property type="match status" value="1"/>
</dbReference>
<dbReference type="Gene3D" id="3.30.1490.20">
    <property type="entry name" value="ATP-grasp fold, A domain"/>
    <property type="match status" value="1"/>
</dbReference>
<dbReference type="Gene3D" id="3.30.470.20">
    <property type="entry name" value="ATP-grasp fold, B domain"/>
    <property type="match status" value="1"/>
</dbReference>
<dbReference type="HAMAP" id="MF_00047">
    <property type="entry name" value="Dala_Dala_lig"/>
    <property type="match status" value="1"/>
</dbReference>
<dbReference type="InterPro" id="IPR011761">
    <property type="entry name" value="ATP-grasp"/>
</dbReference>
<dbReference type="InterPro" id="IPR013815">
    <property type="entry name" value="ATP_grasp_subdomain_1"/>
</dbReference>
<dbReference type="InterPro" id="IPR000291">
    <property type="entry name" value="D-Ala_lig_Van_CS"/>
</dbReference>
<dbReference type="InterPro" id="IPR005905">
    <property type="entry name" value="D_ala_D_ala"/>
</dbReference>
<dbReference type="InterPro" id="IPR011095">
    <property type="entry name" value="Dala_Dala_lig_C"/>
</dbReference>
<dbReference type="InterPro" id="IPR011127">
    <property type="entry name" value="Dala_Dala_lig_N"/>
</dbReference>
<dbReference type="InterPro" id="IPR016185">
    <property type="entry name" value="PreATP-grasp_dom_sf"/>
</dbReference>
<dbReference type="NCBIfam" id="TIGR01205">
    <property type="entry name" value="D_ala_D_alaTIGR"/>
    <property type="match status" value="1"/>
</dbReference>
<dbReference type="NCBIfam" id="NF002378">
    <property type="entry name" value="PRK01372.1"/>
    <property type="match status" value="1"/>
</dbReference>
<dbReference type="PANTHER" id="PTHR23132">
    <property type="entry name" value="D-ALANINE--D-ALANINE LIGASE"/>
    <property type="match status" value="1"/>
</dbReference>
<dbReference type="PANTHER" id="PTHR23132:SF23">
    <property type="entry name" value="D-ALANINE--D-ALANINE LIGASE B"/>
    <property type="match status" value="1"/>
</dbReference>
<dbReference type="Pfam" id="PF07478">
    <property type="entry name" value="Dala_Dala_lig_C"/>
    <property type="match status" value="1"/>
</dbReference>
<dbReference type="Pfam" id="PF01820">
    <property type="entry name" value="Dala_Dala_lig_N"/>
    <property type="match status" value="1"/>
</dbReference>
<dbReference type="PIRSF" id="PIRSF039102">
    <property type="entry name" value="Ddl/VanB"/>
    <property type="match status" value="1"/>
</dbReference>
<dbReference type="SUPFAM" id="SSF56059">
    <property type="entry name" value="Glutathione synthetase ATP-binding domain-like"/>
    <property type="match status" value="1"/>
</dbReference>
<dbReference type="SUPFAM" id="SSF52440">
    <property type="entry name" value="PreATP-grasp domain"/>
    <property type="match status" value="1"/>
</dbReference>
<dbReference type="PROSITE" id="PS50975">
    <property type="entry name" value="ATP_GRASP"/>
    <property type="match status" value="1"/>
</dbReference>
<dbReference type="PROSITE" id="PS00843">
    <property type="entry name" value="DALA_DALA_LIGASE_1"/>
    <property type="match status" value="1"/>
</dbReference>
<dbReference type="PROSITE" id="PS00844">
    <property type="entry name" value="DALA_DALA_LIGASE_2"/>
    <property type="match status" value="1"/>
</dbReference>
<comment type="function">
    <text evidence="2">Cell wall formation.</text>
</comment>
<comment type="catalytic activity">
    <reaction evidence="2">
        <text>2 D-alanine + ATP = D-alanyl-D-alanine + ADP + phosphate + H(+)</text>
        <dbReference type="Rhea" id="RHEA:11224"/>
        <dbReference type="ChEBI" id="CHEBI:15378"/>
        <dbReference type="ChEBI" id="CHEBI:30616"/>
        <dbReference type="ChEBI" id="CHEBI:43474"/>
        <dbReference type="ChEBI" id="CHEBI:57416"/>
        <dbReference type="ChEBI" id="CHEBI:57822"/>
        <dbReference type="ChEBI" id="CHEBI:456216"/>
        <dbReference type="EC" id="6.3.2.4"/>
    </reaction>
</comment>
<comment type="cofactor">
    <cofactor evidence="1">
        <name>Mg(2+)</name>
        <dbReference type="ChEBI" id="CHEBI:18420"/>
    </cofactor>
    <cofactor evidence="1">
        <name>Mn(2+)</name>
        <dbReference type="ChEBI" id="CHEBI:29035"/>
    </cofactor>
    <text evidence="1">Binds 2 magnesium or manganese ions per subunit.</text>
</comment>
<comment type="pathway">
    <text evidence="2">Cell wall biogenesis; peptidoglycan biosynthesis.</text>
</comment>
<comment type="subcellular location">
    <subcellularLocation>
        <location evidence="2">Cytoplasm</location>
    </subcellularLocation>
</comment>
<comment type="similarity">
    <text evidence="2">Belongs to the D-alanine--D-alanine ligase family.</text>
</comment>
<organism>
    <name type="scientific">Caulobacter vibrioides (strain ATCC 19089 / CIP 103742 / CB 15)</name>
    <name type="common">Caulobacter crescentus</name>
    <dbReference type="NCBI Taxonomy" id="190650"/>
    <lineage>
        <taxon>Bacteria</taxon>
        <taxon>Pseudomonadati</taxon>
        <taxon>Pseudomonadota</taxon>
        <taxon>Alphaproteobacteria</taxon>
        <taxon>Caulobacterales</taxon>
        <taxon>Caulobacteraceae</taxon>
        <taxon>Caulobacter</taxon>
    </lineage>
</organism>
<reference key="1">
    <citation type="journal article" date="2001" name="Proc. Natl. Acad. Sci. U.S.A.">
        <title>Complete genome sequence of Caulobacter crescentus.</title>
        <authorList>
            <person name="Nierman W.C."/>
            <person name="Feldblyum T.V."/>
            <person name="Laub M.T."/>
            <person name="Paulsen I.T."/>
            <person name="Nelson K.E."/>
            <person name="Eisen J.A."/>
            <person name="Heidelberg J.F."/>
            <person name="Alley M.R.K."/>
            <person name="Ohta N."/>
            <person name="Maddock J.R."/>
            <person name="Potocka I."/>
            <person name="Nelson W.C."/>
            <person name="Newton A."/>
            <person name="Stephens C."/>
            <person name="Phadke N.D."/>
            <person name="Ely B."/>
            <person name="DeBoy R.T."/>
            <person name="Dodson R.J."/>
            <person name="Durkin A.S."/>
            <person name="Gwinn M.L."/>
            <person name="Haft D.H."/>
            <person name="Kolonay J.F."/>
            <person name="Smit J."/>
            <person name="Craven M.B."/>
            <person name="Khouri H.M."/>
            <person name="Shetty J."/>
            <person name="Berry K.J."/>
            <person name="Utterback T.R."/>
            <person name="Tran K."/>
            <person name="Wolf A.M."/>
            <person name="Vamathevan J.J."/>
            <person name="Ermolaeva M.D."/>
            <person name="White O."/>
            <person name="Salzberg S.L."/>
            <person name="Venter J.C."/>
            <person name="Shapiro L."/>
            <person name="Fraser C.M."/>
        </authorList>
    </citation>
    <scope>NUCLEOTIDE SEQUENCE [LARGE SCALE GENOMIC DNA]</scope>
    <source>
        <strain>ATCC 19089 / CIP 103742 / CB 15</strain>
    </source>
</reference>
<evidence type="ECO:0000250" key="1"/>
<evidence type="ECO:0000255" key="2">
    <source>
        <dbReference type="HAMAP-Rule" id="MF_00047"/>
    </source>
</evidence>
<keyword id="KW-0067">ATP-binding</keyword>
<keyword id="KW-0133">Cell shape</keyword>
<keyword id="KW-0961">Cell wall biogenesis/degradation</keyword>
<keyword id="KW-0963">Cytoplasm</keyword>
<keyword id="KW-0436">Ligase</keyword>
<keyword id="KW-0460">Magnesium</keyword>
<keyword id="KW-0464">Manganese</keyword>
<keyword id="KW-0479">Metal-binding</keyword>
<keyword id="KW-0547">Nucleotide-binding</keyword>
<keyword id="KW-0573">Peptidoglycan synthesis</keyword>
<keyword id="KW-1185">Reference proteome</keyword>
<name>DDL_CAUVC</name>
<feature type="chain" id="PRO_0000177802" description="D-alanine--D-alanine ligase">
    <location>
        <begin position="1"/>
        <end position="324"/>
    </location>
</feature>
<feature type="domain" description="ATP-grasp" evidence="2">
    <location>
        <begin position="112"/>
        <end position="312"/>
    </location>
</feature>
<feature type="binding site" evidence="2">
    <location>
        <begin position="139"/>
        <end position="193"/>
    </location>
    <ligand>
        <name>ATP</name>
        <dbReference type="ChEBI" id="CHEBI:30616"/>
    </ligand>
</feature>
<feature type="binding site" evidence="2">
    <location>
        <position position="265"/>
    </location>
    <ligand>
        <name>Mg(2+)</name>
        <dbReference type="ChEBI" id="CHEBI:18420"/>
        <label>1</label>
    </ligand>
</feature>
<feature type="binding site" evidence="2">
    <location>
        <position position="279"/>
    </location>
    <ligand>
        <name>Mg(2+)</name>
        <dbReference type="ChEBI" id="CHEBI:18420"/>
        <label>1</label>
    </ligand>
</feature>
<feature type="binding site" evidence="2">
    <location>
        <position position="279"/>
    </location>
    <ligand>
        <name>Mg(2+)</name>
        <dbReference type="ChEBI" id="CHEBI:18420"/>
        <label>2</label>
    </ligand>
</feature>
<feature type="binding site" evidence="2">
    <location>
        <position position="281"/>
    </location>
    <ligand>
        <name>Mg(2+)</name>
        <dbReference type="ChEBI" id="CHEBI:18420"/>
        <label>2</label>
    </ligand>
</feature>
<proteinExistence type="inferred from homology"/>
<sequence>MTQQPQADAPLAGRHIAVLLGGPSSERKVSLVSGAACAEALERLGAKVSRIDPGPDVAQVLAATKPDMVFNALHGEWGEDGCVQGVLETLKLPYTHSGVLASALAMDKAKAKAVLAAAGVTVPGGGLFNRHDVARDHVLQPPYVVKPNAEGSSVGVFIIKEGANRPPEEVGAPSWTFGEEVMVEPYIQGMELAVAVLGESNGPRALAVTDIRASTGFYDYEAKYSEGGSIHVLPAPIPNAVRDRAMRMAELAHTALGCRGVTRSDFRYDDINDLLVLLEVNTQPGMTPTSLAPEQADHVGIPFDQLVLWIVEDAYARCSAGGTA</sequence>
<protein>
    <recommendedName>
        <fullName evidence="2">D-alanine--D-alanine ligase</fullName>
        <ecNumber evidence="2">6.3.2.4</ecNumber>
    </recommendedName>
    <alternativeName>
        <fullName evidence="2">D-Ala-D-Ala ligase</fullName>
    </alternativeName>
    <alternativeName>
        <fullName evidence="2">D-alanylalanine synthetase</fullName>
    </alternativeName>
</protein>
<gene>
    <name evidence="2" type="primary">ddl</name>
    <name type="ordered locus">CC_2543</name>
</gene>